<name>NPCB_RHOOP</name>
<reference key="1">
    <citation type="journal article" date="2004" name="J. Bacteriol.">
        <title>A novel p-nitrophenol degradation gene cluster from a gram-positive bacterium, Rhodococcus opacus SAO101.</title>
        <authorList>
            <person name="Kitagawa W."/>
            <person name="Kimura N."/>
            <person name="Kamagata Y."/>
        </authorList>
    </citation>
    <scope>NUCLEOTIDE SEQUENCE [GENOMIC DNA]</scope>
    <scope>FUNCTION</scope>
    <scope>INDUCTION</scope>
    <scope>SUBUNIT</scope>
    <scope>NOMENCLATURE</scope>
    <source>
        <strain>SAO101</strain>
    </source>
</reference>
<reference key="2">
    <citation type="journal article" date="1998" name="Appl. Environ. Microbiol.">
        <title>A two-component monooxygenase catalyzes both the hydroxylation of p-nitrophenol and the oxidative release of nitrite from 4-nitrocatechol in Bacillus sphaericus JS905.</title>
        <authorList>
            <person name="Kadiyala V."/>
            <person name="Spain J.C."/>
        </authorList>
    </citation>
    <scope>FUNCTION</scope>
    <scope>CATALYTIC ACTIVITY</scope>
    <scope>ACTIVITY REGULATION</scope>
    <scope>BIOPHYSICOCHEMICAL PROPERTIES</scope>
    <scope>SUBSTRATE SPECIFICITY</scope>
    <scope>NOMENCLATURE</scope>
    <source>
        <strain>JS905</strain>
    </source>
</reference>
<evidence type="ECO:0000269" key="1">
    <source>
    </source>
</evidence>
<evidence type="ECO:0000269" key="2">
    <source>
    </source>
</evidence>
<evidence type="ECO:0000305" key="3"/>
<evidence type="ECO:0000305" key="4">
    <source>
    </source>
</evidence>
<protein>
    <recommendedName>
        <fullName>4-nitrophenol 4-monooxygenase/4-nitrocatechol 2-monooxygenase, reductase component</fullName>
        <shortName>4-NP/4-NCA monooxygenase</shortName>
        <ecNumber>1.14.13.166</ecNumber>
        <ecNumber>1.14.13.29</ecNumber>
    </recommendedName>
    <alternativeName>
        <fullName>PNP monooxygenase</fullName>
    </alternativeName>
</protein>
<sequence>MLEDPMKQNVLQPLDKAEFRNVVGHFASGVTIVTAAHDGVPYGATISAVTSLCDTPPMVLVCLNQKLGTHAAIRKARHFTINILGEDQASLAHTFATPGADKFADVAVHHRQHGPRLAEALAYLTCRVVDDLEGGTHRIFVAEVVEAQAGTGNPLSYYRGRFGHFVPYRNAMWRTTQADNAVSPH</sequence>
<keyword id="KW-0058">Aromatic hydrocarbons catabolism</keyword>
<keyword id="KW-0503">Monooxygenase</keyword>
<keyword id="KW-0520">NAD</keyword>
<keyword id="KW-0560">Oxidoreductase</keyword>
<accession>Q6F4M9</accession>
<dbReference type="EC" id="1.14.13.166"/>
<dbReference type="EC" id="1.14.13.29"/>
<dbReference type="EMBL" id="AB154422">
    <property type="protein sequence ID" value="BAD30041.1"/>
    <property type="molecule type" value="Genomic_DNA"/>
</dbReference>
<dbReference type="RefSeq" id="WP_063709723.1">
    <property type="nucleotide sequence ID" value="NZ_CP051855.1"/>
</dbReference>
<dbReference type="SMR" id="Q6F4M9"/>
<dbReference type="KEGG" id="ag:BAD30041"/>
<dbReference type="BioCyc" id="MetaCyc:MONOMER-17434"/>
<dbReference type="BRENDA" id="1.14.13.166">
    <property type="organism ID" value="698"/>
</dbReference>
<dbReference type="GO" id="GO:0018592">
    <property type="term" value="F:4-nitrocatechol 4-monooxygenase activity"/>
    <property type="evidence" value="ECO:0007669"/>
    <property type="project" value="UniProtKB-EC"/>
</dbReference>
<dbReference type="GO" id="GO:0018601">
    <property type="term" value="F:4-nitrophenol 2-monooxygenase activity"/>
    <property type="evidence" value="ECO:0007669"/>
    <property type="project" value="UniProtKB-EC"/>
</dbReference>
<dbReference type="GO" id="GO:0010181">
    <property type="term" value="F:FMN binding"/>
    <property type="evidence" value="ECO:0007669"/>
    <property type="project" value="InterPro"/>
</dbReference>
<dbReference type="GO" id="GO:0042602">
    <property type="term" value="F:riboflavin reductase (NADPH) activity"/>
    <property type="evidence" value="ECO:0007669"/>
    <property type="project" value="TreeGrafter"/>
</dbReference>
<dbReference type="GO" id="GO:0009056">
    <property type="term" value="P:catabolic process"/>
    <property type="evidence" value="ECO:0007669"/>
    <property type="project" value="UniProtKB-KW"/>
</dbReference>
<dbReference type="Gene3D" id="2.30.110.10">
    <property type="entry name" value="Electron Transport, Fmn-binding Protein, Chain A"/>
    <property type="match status" value="1"/>
</dbReference>
<dbReference type="InterPro" id="IPR002563">
    <property type="entry name" value="Flavin_Rdtase-like_dom"/>
</dbReference>
<dbReference type="InterPro" id="IPR050268">
    <property type="entry name" value="NADH-dep_flavin_reductase"/>
</dbReference>
<dbReference type="InterPro" id="IPR012349">
    <property type="entry name" value="Split_barrel_FMN-bd"/>
</dbReference>
<dbReference type="PANTHER" id="PTHR30466">
    <property type="entry name" value="FLAVIN REDUCTASE"/>
    <property type="match status" value="1"/>
</dbReference>
<dbReference type="PANTHER" id="PTHR30466:SF11">
    <property type="entry name" value="FLAVIN-DEPENDENT MONOOXYGENASE, REDUCTASE SUBUNIT HSAB"/>
    <property type="match status" value="1"/>
</dbReference>
<dbReference type="Pfam" id="PF01613">
    <property type="entry name" value="Flavin_Reduct"/>
    <property type="match status" value="1"/>
</dbReference>
<dbReference type="SMART" id="SM00903">
    <property type="entry name" value="Flavin_Reduct"/>
    <property type="match status" value="1"/>
</dbReference>
<dbReference type="SUPFAM" id="SSF50475">
    <property type="entry name" value="FMN-binding split barrel"/>
    <property type="match status" value="1"/>
</dbReference>
<organism>
    <name type="scientific">Rhodococcus opacus</name>
    <name type="common">Nocardia opaca</name>
    <dbReference type="NCBI Taxonomy" id="37919"/>
    <lineage>
        <taxon>Bacteria</taxon>
        <taxon>Bacillati</taxon>
        <taxon>Actinomycetota</taxon>
        <taxon>Actinomycetes</taxon>
        <taxon>Mycobacteriales</taxon>
        <taxon>Nocardiaceae</taxon>
        <taxon>Rhodococcus</taxon>
    </lineage>
</organism>
<feature type="chain" id="PRO_0000422328" description="4-nitrophenol 4-monooxygenase/4-nitrocatechol 2-monooxygenase, reductase component">
    <location>
        <begin position="1"/>
        <end position="185"/>
    </location>
</feature>
<proteinExistence type="evidence at protein level"/>
<comment type="function">
    <text evidence="1 2">Involved in the degradation of para-nitrophenol (4-NP). Catalyzes both the initial hydroxylation of 4-NP to produce 4-nitrocatechol (4-NCA) and the subsequent oxidative release of the nitro group from 4-NCA to produce 2-hydroxy-1,4-benzoquinone. It can also use 4-nitroresorcinol as substrate with a rate of nitrite release similar to that observed with the two physiological substrates, 4-PN and 4-NCA.</text>
</comment>
<comment type="catalytic activity">
    <reaction evidence="2">
        <text>4-nitrophenol + NADH + O2 + H(+) = 4-nitrocatechol + NAD(+) + H2O</text>
        <dbReference type="Rhea" id="RHEA:12568"/>
        <dbReference type="ChEBI" id="CHEBI:15377"/>
        <dbReference type="ChEBI" id="CHEBI:15378"/>
        <dbReference type="ChEBI" id="CHEBI:15379"/>
        <dbReference type="ChEBI" id="CHEBI:57540"/>
        <dbReference type="ChEBI" id="CHEBI:57730"/>
        <dbReference type="ChEBI" id="CHEBI:57917"/>
        <dbReference type="ChEBI" id="CHEBI:57945"/>
        <dbReference type="EC" id="1.14.13.29"/>
    </reaction>
</comment>
<comment type="catalytic activity">
    <reaction evidence="2">
        <text>4-nitrocatechol + NADPH + O2 = 2-hydroxy-1,4-benzoquinone + nitrite + NADP(+) + H2O</text>
        <dbReference type="Rhea" id="RHEA:34307"/>
        <dbReference type="ChEBI" id="CHEBI:15377"/>
        <dbReference type="ChEBI" id="CHEBI:15379"/>
        <dbReference type="ChEBI" id="CHEBI:16301"/>
        <dbReference type="ChEBI" id="CHEBI:57730"/>
        <dbReference type="ChEBI" id="CHEBI:57783"/>
        <dbReference type="ChEBI" id="CHEBI:58349"/>
        <dbReference type="ChEBI" id="CHEBI:58474"/>
        <dbReference type="EC" id="1.14.13.166"/>
    </reaction>
</comment>
<comment type="catalytic activity">
    <reaction evidence="2">
        <text>4-nitrocatechol + NADH + O2 = 2-hydroxy-1,4-benzoquinone + nitrite + NAD(+) + H2O</text>
        <dbReference type="Rhea" id="RHEA:34311"/>
        <dbReference type="ChEBI" id="CHEBI:15377"/>
        <dbReference type="ChEBI" id="CHEBI:15379"/>
        <dbReference type="ChEBI" id="CHEBI:16301"/>
        <dbReference type="ChEBI" id="CHEBI:57540"/>
        <dbReference type="ChEBI" id="CHEBI:57730"/>
        <dbReference type="ChEBI" id="CHEBI:57945"/>
        <dbReference type="ChEBI" id="CHEBI:58474"/>
        <dbReference type="EC" id="1.14.13.166"/>
    </reaction>
</comment>
<comment type="activity regulation">
    <text evidence="2">Inhibited by methimazole.</text>
</comment>
<comment type="pathway">
    <text>Aromatic compound metabolism.</text>
</comment>
<comment type="pathway">
    <text>Xenobiotic degradation.</text>
</comment>
<comment type="subunit">
    <text evidence="4">The 4-NP/4-NCA monooxygenase is composed of an oxygenase component NpcA and a reductase component NpcB.</text>
</comment>
<comment type="induction">
    <text evidence="1">By 4-NP.</text>
</comment>
<comment type="similarity">
    <text evidence="3">Belongs to the non-flavoprotein flavin reductase family.</text>
</comment>
<gene>
    <name type="primary">npcB</name>
</gene>